<accession>P62409</accession>
<proteinExistence type="inferred from homology"/>
<sequence>MNKKSIRDVDLKGKRVFCRVDFNVPMKEGKITDETRIRAALPTIQYLVEQGAKVILASHLGRPKGQVVEEMRLTPVAARLGELLGKDVKKADEAFGPAVQEMVAAMNEGDVLVLENVRFYAGEEKNDAELAKEFAALADIFVNDAFGAAHRAHASTAGIADYLPAVSGLLMEKELDVLGKALSNPDRPFTAIIGGAKVKDKIGVIRHLLDKVDNLIIGGGLAYTFVKALGHEIGLSLCEDDKIELAKEFMQLAKEKGVNFYMPVDVVITEEFSETATTKIVNIDSIPSNWEGVDIGPKTREIYADVIKNSKLVVWNGPMGVFEMTPFAEGTKAVGQALADAEGTYSVIGGGDSAAAVEKFGMADKMSHISTGGGASLEFMEGKELPGVVCLNDK</sequence>
<keyword id="KW-0067">ATP-binding</keyword>
<keyword id="KW-0963">Cytoplasm</keyword>
<keyword id="KW-0324">Glycolysis</keyword>
<keyword id="KW-0418">Kinase</keyword>
<keyword id="KW-0547">Nucleotide-binding</keyword>
<keyword id="KW-0597">Phosphoprotein</keyword>
<keyword id="KW-0808">Transferase</keyword>
<reference key="1">
    <citation type="journal article" date="2004" name="Nucleic Acids Res.">
        <title>The genome sequence of Bacillus cereus ATCC 10987 reveals metabolic adaptations and a large plasmid related to Bacillus anthracis pXO1.</title>
        <authorList>
            <person name="Rasko D.A."/>
            <person name="Ravel J."/>
            <person name="Oekstad O.A."/>
            <person name="Helgason E."/>
            <person name="Cer R.Z."/>
            <person name="Jiang L."/>
            <person name="Shores K.A."/>
            <person name="Fouts D.E."/>
            <person name="Tourasse N.J."/>
            <person name="Angiuoli S.V."/>
            <person name="Kolonay J.F."/>
            <person name="Nelson W.C."/>
            <person name="Kolstoe A.-B."/>
            <person name="Fraser C.M."/>
            <person name="Read T.D."/>
        </authorList>
    </citation>
    <scope>NUCLEOTIDE SEQUENCE [LARGE SCALE GENOMIC DNA]</scope>
    <source>
        <strain>ATCC 10987 / NRS 248</strain>
    </source>
</reference>
<evidence type="ECO:0000255" key="1">
    <source>
        <dbReference type="HAMAP-Rule" id="MF_00145"/>
    </source>
</evidence>
<name>PGK_BACC1</name>
<organism>
    <name type="scientific">Bacillus cereus (strain ATCC 10987 / NRS 248)</name>
    <dbReference type="NCBI Taxonomy" id="222523"/>
    <lineage>
        <taxon>Bacteria</taxon>
        <taxon>Bacillati</taxon>
        <taxon>Bacillota</taxon>
        <taxon>Bacilli</taxon>
        <taxon>Bacillales</taxon>
        <taxon>Bacillaceae</taxon>
        <taxon>Bacillus</taxon>
        <taxon>Bacillus cereus group</taxon>
    </lineage>
</organism>
<feature type="chain" id="PRO_0000145900" description="Phosphoglycerate kinase">
    <location>
        <begin position="1"/>
        <end position="394"/>
    </location>
</feature>
<feature type="binding site" evidence="1">
    <location>
        <begin position="21"/>
        <end position="23"/>
    </location>
    <ligand>
        <name>substrate</name>
    </ligand>
</feature>
<feature type="binding site" evidence="1">
    <location>
        <position position="36"/>
    </location>
    <ligand>
        <name>substrate</name>
    </ligand>
</feature>
<feature type="binding site" evidence="1">
    <location>
        <begin position="59"/>
        <end position="62"/>
    </location>
    <ligand>
        <name>substrate</name>
    </ligand>
</feature>
<feature type="binding site" evidence="1">
    <location>
        <position position="118"/>
    </location>
    <ligand>
        <name>substrate</name>
    </ligand>
</feature>
<feature type="binding site" evidence="1">
    <location>
        <position position="151"/>
    </location>
    <ligand>
        <name>substrate</name>
    </ligand>
</feature>
<feature type="binding site" evidence="1">
    <location>
        <position position="201"/>
    </location>
    <ligand>
        <name>ATP</name>
        <dbReference type="ChEBI" id="CHEBI:30616"/>
    </ligand>
</feature>
<feature type="binding site" evidence="1">
    <location>
        <position position="292"/>
    </location>
    <ligand>
        <name>ATP</name>
        <dbReference type="ChEBI" id="CHEBI:30616"/>
    </ligand>
</feature>
<feature type="binding site" evidence="1">
    <location>
        <position position="323"/>
    </location>
    <ligand>
        <name>ATP</name>
        <dbReference type="ChEBI" id="CHEBI:30616"/>
    </ligand>
</feature>
<feature type="binding site" evidence="1">
    <location>
        <begin position="350"/>
        <end position="353"/>
    </location>
    <ligand>
        <name>ATP</name>
        <dbReference type="ChEBI" id="CHEBI:30616"/>
    </ligand>
</feature>
<feature type="modified residue" description="Phosphoserine" evidence="1">
    <location>
        <position position="183"/>
    </location>
</feature>
<feature type="modified residue" description="Phosphothreonine" evidence="1">
    <location>
        <position position="299"/>
    </location>
</feature>
<protein>
    <recommendedName>
        <fullName evidence="1">Phosphoglycerate kinase</fullName>
        <ecNumber evidence="1">2.7.2.3</ecNumber>
    </recommendedName>
</protein>
<gene>
    <name evidence="1" type="primary">pgk</name>
    <name type="ordered locus">BCE_5241</name>
</gene>
<comment type="catalytic activity">
    <reaction evidence="1">
        <text>(2R)-3-phosphoglycerate + ATP = (2R)-3-phospho-glyceroyl phosphate + ADP</text>
        <dbReference type="Rhea" id="RHEA:14801"/>
        <dbReference type="ChEBI" id="CHEBI:30616"/>
        <dbReference type="ChEBI" id="CHEBI:57604"/>
        <dbReference type="ChEBI" id="CHEBI:58272"/>
        <dbReference type="ChEBI" id="CHEBI:456216"/>
        <dbReference type="EC" id="2.7.2.3"/>
    </reaction>
</comment>
<comment type="pathway">
    <text evidence="1">Carbohydrate degradation; glycolysis; pyruvate from D-glyceraldehyde 3-phosphate: step 2/5.</text>
</comment>
<comment type="subunit">
    <text evidence="1">Monomer.</text>
</comment>
<comment type="subcellular location">
    <subcellularLocation>
        <location evidence="1">Cytoplasm</location>
    </subcellularLocation>
</comment>
<comment type="similarity">
    <text evidence="1">Belongs to the phosphoglycerate kinase family.</text>
</comment>
<dbReference type="EC" id="2.7.2.3" evidence="1"/>
<dbReference type="EMBL" id="AE017194">
    <property type="protein sequence ID" value="AAS44142.1"/>
    <property type="molecule type" value="Genomic_DNA"/>
</dbReference>
<dbReference type="KEGG" id="bca:BCE_5241"/>
<dbReference type="HOGENOM" id="CLU_025427_0_2_9"/>
<dbReference type="UniPathway" id="UPA00109">
    <property type="reaction ID" value="UER00185"/>
</dbReference>
<dbReference type="Proteomes" id="UP000002527">
    <property type="component" value="Chromosome"/>
</dbReference>
<dbReference type="GO" id="GO:0005829">
    <property type="term" value="C:cytosol"/>
    <property type="evidence" value="ECO:0007669"/>
    <property type="project" value="TreeGrafter"/>
</dbReference>
<dbReference type="GO" id="GO:0043531">
    <property type="term" value="F:ADP binding"/>
    <property type="evidence" value="ECO:0007669"/>
    <property type="project" value="TreeGrafter"/>
</dbReference>
<dbReference type="GO" id="GO:0005524">
    <property type="term" value="F:ATP binding"/>
    <property type="evidence" value="ECO:0007669"/>
    <property type="project" value="UniProtKB-KW"/>
</dbReference>
<dbReference type="GO" id="GO:0004618">
    <property type="term" value="F:phosphoglycerate kinase activity"/>
    <property type="evidence" value="ECO:0007669"/>
    <property type="project" value="UniProtKB-UniRule"/>
</dbReference>
<dbReference type="GO" id="GO:0006094">
    <property type="term" value="P:gluconeogenesis"/>
    <property type="evidence" value="ECO:0007669"/>
    <property type="project" value="TreeGrafter"/>
</dbReference>
<dbReference type="GO" id="GO:0006096">
    <property type="term" value="P:glycolytic process"/>
    <property type="evidence" value="ECO:0007669"/>
    <property type="project" value="UniProtKB-UniRule"/>
</dbReference>
<dbReference type="CDD" id="cd00318">
    <property type="entry name" value="Phosphoglycerate_kinase"/>
    <property type="match status" value="1"/>
</dbReference>
<dbReference type="FunFam" id="3.40.50.1260:FF:000001">
    <property type="entry name" value="Phosphoglycerate kinase"/>
    <property type="match status" value="1"/>
</dbReference>
<dbReference type="FunFam" id="3.40.50.1260:FF:000002">
    <property type="entry name" value="Phosphoglycerate kinase"/>
    <property type="match status" value="1"/>
</dbReference>
<dbReference type="Gene3D" id="3.40.50.1260">
    <property type="entry name" value="Phosphoglycerate kinase, N-terminal domain"/>
    <property type="match status" value="2"/>
</dbReference>
<dbReference type="HAMAP" id="MF_00145">
    <property type="entry name" value="Phosphoglyc_kinase"/>
    <property type="match status" value="1"/>
</dbReference>
<dbReference type="InterPro" id="IPR001576">
    <property type="entry name" value="Phosphoglycerate_kinase"/>
</dbReference>
<dbReference type="InterPro" id="IPR015911">
    <property type="entry name" value="Phosphoglycerate_kinase_CS"/>
</dbReference>
<dbReference type="InterPro" id="IPR015824">
    <property type="entry name" value="Phosphoglycerate_kinase_N"/>
</dbReference>
<dbReference type="InterPro" id="IPR036043">
    <property type="entry name" value="Phosphoglycerate_kinase_sf"/>
</dbReference>
<dbReference type="PANTHER" id="PTHR11406">
    <property type="entry name" value="PHOSPHOGLYCERATE KINASE"/>
    <property type="match status" value="1"/>
</dbReference>
<dbReference type="PANTHER" id="PTHR11406:SF23">
    <property type="entry name" value="PHOSPHOGLYCERATE KINASE 1, CHLOROPLASTIC-RELATED"/>
    <property type="match status" value="1"/>
</dbReference>
<dbReference type="Pfam" id="PF00162">
    <property type="entry name" value="PGK"/>
    <property type="match status" value="1"/>
</dbReference>
<dbReference type="PIRSF" id="PIRSF000724">
    <property type="entry name" value="Pgk"/>
    <property type="match status" value="1"/>
</dbReference>
<dbReference type="PRINTS" id="PR00477">
    <property type="entry name" value="PHGLYCKINASE"/>
</dbReference>
<dbReference type="SUPFAM" id="SSF53748">
    <property type="entry name" value="Phosphoglycerate kinase"/>
    <property type="match status" value="1"/>
</dbReference>
<dbReference type="PROSITE" id="PS00111">
    <property type="entry name" value="PGLYCERATE_KINASE"/>
    <property type="match status" value="1"/>
</dbReference>